<reference key="1">
    <citation type="journal article" date="2006" name="J. Bacteriol.">
        <title>Whole-genome sequence of Listeria welshimeri reveals common steps in genome reduction with Listeria innocua as compared to Listeria monocytogenes.</title>
        <authorList>
            <person name="Hain T."/>
            <person name="Steinweg C."/>
            <person name="Kuenne C.T."/>
            <person name="Billion A."/>
            <person name="Ghai R."/>
            <person name="Chatterjee S.S."/>
            <person name="Domann E."/>
            <person name="Kaerst U."/>
            <person name="Goesmann A."/>
            <person name="Bekel T."/>
            <person name="Bartels D."/>
            <person name="Kaiser O."/>
            <person name="Meyer F."/>
            <person name="Puehler A."/>
            <person name="Weisshaar B."/>
            <person name="Wehland J."/>
            <person name="Liang C."/>
            <person name="Dandekar T."/>
            <person name="Lampidis R."/>
            <person name="Kreft J."/>
            <person name="Goebel W."/>
            <person name="Chakraborty T."/>
        </authorList>
    </citation>
    <scope>NUCLEOTIDE SEQUENCE [LARGE SCALE GENOMIC DNA]</scope>
    <source>
        <strain>ATCC 35897 / DSM 20650 / CCUG 15529 / CIP 8149 / NCTC 11857 / SLCC 5334 / V8</strain>
    </source>
</reference>
<protein>
    <recommendedName>
        <fullName evidence="1">Pantothenate synthetase</fullName>
        <shortName evidence="1">PS</shortName>
        <ecNumber evidence="1">6.3.2.1</ecNumber>
    </recommendedName>
    <alternativeName>
        <fullName evidence="1">Pantoate--beta-alanine ligase</fullName>
    </alternativeName>
    <alternativeName>
        <fullName evidence="1">Pantoate-activating enzyme</fullName>
    </alternativeName>
</protein>
<evidence type="ECO:0000255" key="1">
    <source>
        <dbReference type="HAMAP-Rule" id="MF_00158"/>
    </source>
</evidence>
<proteinExistence type="inferred from homology"/>
<name>PANC_LISW6</name>
<dbReference type="EC" id="6.3.2.1" evidence="1"/>
<dbReference type="EMBL" id="AM263198">
    <property type="protein sequence ID" value="CAK21338.1"/>
    <property type="molecule type" value="Genomic_DNA"/>
</dbReference>
<dbReference type="RefSeq" id="WP_011702686.1">
    <property type="nucleotide sequence ID" value="NC_008555.1"/>
</dbReference>
<dbReference type="SMR" id="A0AK06"/>
<dbReference type="STRING" id="386043.lwe1920"/>
<dbReference type="GeneID" id="61189822"/>
<dbReference type="KEGG" id="lwe:lwe1920"/>
<dbReference type="eggNOG" id="COG0414">
    <property type="taxonomic scope" value="Bacteria"/>
</dbReference>
<dbReference type="HOGENOM" id="CLU_047148_0_0_9"/>
<dbReference type="OrthoDB" id="9773087at2"/>
<dbReference type="UniPathway" id="UPA00028">
    <property type="reaction ID" value="UER00005"/>
</dbReference>
<dbReference type="Proteomes" id="UP000000779">
    <property type="component" value="Chromosome"/>
</dbReference>
<dbReference type="GO" id="GO:0005829">
    <property type="term" value="C:cytosol"/>
    <property type="evidence" value="ECO:0007669"/>
    <property type="project" value="TreeGrafter"/>
</dbReference>
<dbReference type="GO" id="GO:0005524">
    <property type="term" value="F:ATP binding"/>
    <property type="evidence" value="ECO:0007669"/>
    <property type="project" value="UniProtKB-KW"/>
</dbReference>
<dbReference type="GO" id="GO:0004592">
    <property type="term" value="F:pantoate-beta-alanine ligase activity"/>
    <property type="evidence" value="ECO:0007669"/>
    <property type="project" value="UniProtKB-UniRule"/>
</dbReference>
<dbReference type="GO" id="GO:0015940">
    <property type="term" value="P:pantothenate biosynthetic process"/>
    <property type="evidence" value="ECO:0007669"/>
    <property type="project" value="UniProtKB-UniRule"/>
</dbReference>
<dbReference type="CDD" id="cd00560">
    <property type="entry name" value="PanC"/>
    <property type="match status" value="1"/>
</dbReference>
<dbReference type="FunFam" id="3.30.1300.10:FF:000001">
    <property type="entry name" value="Pantothenate synthetase"/>
    <property type="match status" value="1"/>
</dbReference>
<dbReference type="FunFam" id="3.40.50.620:FF:000013">
    <property type="entry name" value="Pantothenate synthetase"/>
    <property type="match status" value="1"/>
</dbReference>
<dbReference type="Gene3D" id="3.40.50.620">
    <property type="entry name" value="HUPs"/>
    <property type="match status" value="1"/>
</dbReference>
<dbReference type="Gene3D" id="3.30.1300.10">
    <property type="entry name" value="Pantoate-beta-alanine ligase, C-terminal domain"/>
    <property type="match status" value="1"/>
</dbReference>
<dbReference type="HAMAP" id="MF_00158">
    <property type="entry name" value="PanC"/>
    <property type="match status" value="1"/>
</dbReference>
<dbReference type="InterPro" id="IPR004821">
    <property type="entry name" value="Cyt_trans-like"/>
</dbReference>
<dbReference type="InterPro" id="IPR003721">
    <property type="entry name" value="Pantoate_ligase"/>
</dbReference>
<dbReference type="InterPro" id="IPR042176">
    <property type="entry name" value="Pantoate_ligase_C"/>
</dbReference>
<dbReference type="InterPro" id="IPR014729">
    <property type="entry name" value="Rossmann-like_a/b/a_fold"/>
</dbReference>
<dbReference type="NCBIfam" id="TIGR00125">
    <property type="entry name" value="cyt_tran_rel"/>
    <property type="match status" value="1"/>
</dbReference>
<dbReference type="NCBIfam" id="TIGR00018">
    <property type="entry name" value="panC"/>
    <property type="match status" value="1"/>
</dbReference>
<dbReference type="PANTHER" id="PTHR21299">
    <property type="entry name" value="CYTIDYLATE KINASE/PANTOATE-BETA-ALANINE LIGASE"/>
    <property type="match status" value="1"/>
</dbReference>
<dbReference type="PANTHER" id="PTHR21299:SF1">
    <property type="entry name" value="PANTOATE--BETA-ALANINE LIGASE"/>
    <property type="match status" value="1"/>
</dbReference>
<dbReference type="Pfam" id="PF02569">
    <property type="entry name" value="Pantoate_ligase"/>
    <property type="match status" value="1"/>
</dbReference>
<dbReference type="SUPFAM" id="SSF52374">
    <property type="entry name" value="Nucleotidylyl transferase"/>
    <property type="match status" value="1"/>
</dbReference>
<keyword id="KW-0067">ATP-binding</keyword>
<keyword id="KW-0963">Cytoplasm</keyword>
<keyword id="KW-0436">Ligase</keyword>
<keyword id="KW-0547">Nucleotide-binding</keyword>
<keyword id="KW-0566">Pantothenate biosynthesis</keyword>
<gene>
    <name evidence="1" type="primary">panC</name>
    <name type="ordered locus">lwe1920</name>
</gene>
<comment type="function">
    <text evidence="1">Catalyzes the condensation of pantoate with beta-alanine in an ATP-dependent reaction via a pantoyl-adenylate intermediate.</text>
</comment>
<comment type="catalytic activity">
    <reaction evidence="1">
        <text>(R)-pantoate + beta-alanine + ATP = (R)-pantothenate + AMP + diphosphate + H(+)</text>
        <dbReference type="Rhea" id="RHEA:10912"/>
        <dbReference type="ChEBI" id="CHEBI:15378"/>
        <dbReference type="ChEBI" id="CHEBI:15980"/>
        <dbReference type="ChEBI" id="CHEBI:29032"/>
        <dbReference type="ChEBI" id="CHEBI:30616"/>
        <dbReference type="ChEBI" id="CHEBI:33019"/>
        <dbReference type="ChEBI" id="CHEBI:57966"/>
        <dbReference type="ChEBI" id="CHEBI:456215"/>
        <dbReference type="EC" id="6.3.2.1"/>
    </reaction>
</comment>
<comment type="pathway">
    <text evidence="1">Cofactor biosynthesis; (R)-pantothenate biosynthesis; (R)-pantothenate from (R)-pantoate and beta-alanine: step 1/1.</text>
</comment>
<comment type="subunit">
    <text evidence="1">Homodimer.</text>
</comment>
<comment type="subcellular location">
    <subcellularLocation>
        <location evidence="1">Cytoplasm</location>
    </subcellularLocation>
</comment>
<comment type="miscellaneous">
    <text evidence="1">The reaction proceeds by a bi uni uni bi ping pong mechanism.</text>
</comment>
<comment type="similarity">
    <text evidence="1">Belongs to the pantothenate synthetase family.</text>
</comment>
<accession>A0AK06</accession>
<organism>
    <name type="scientific">Listeria welshimeri serovar 6b (strain ATCC 35897 / DSM 20650 / CCUG 15529 / CIP 8149 / NCTC 11857 / SLCC 5334 / V8)</name>
    <dbReference type="NCBI Taxonomy" id="386043"/>
    <lineage>
        <taxon>Bacteria</taxon>
        <taxon>Bacillati</taxon>
        <taxon>Bacillota</taxon>
        <taxon>Bacilli</taxon>
        <taxon>Bacillales</taxon>
        <taxon>Listeriaceae</taxon>
        <taxon>Listeria</taxon>
    </lineage>
</organism>
<sequence>MLIIRNKQALKEAILKETQVNKTIGFVPTMGFLHEGHMTLVKHARKENDVVVMSVFVNPTQFGPNEDFDAYPRDEAHDAKLAEEGGVDILFVPSVEEIYPVELATKLHVIKRVSVLDGADREGHFDGVVTVLTKLFHLVNPNNAYFGQKDAQQVAVVSGLVEDYFFPVNLRIISTVRETDGLAKSSRNVYLTDKERKEAPVIHAALQLGRQLIESGETDETKIVQMMTDKINEQTAHEKIAYLALYAYPDFTPVTDWSKGIIIAAAVKYSKARLIDNELINVKRR</sequence>
<feature type="chain" id="PRO_0000305476" description="Pantothenate synthetase">
    <location>
        <begin position="1"/>
        <end position="285"/>
    </location>
</feature>
<feature type="active site" description="Proton donor" evidence="1">
    <location>
        <position position="37"/>
    </location>
</feature>
<feature type="binding site" evidence="1">
    <location>
        <begin position="30"/>
        <end position="37"/>
    </location>
    <ligand>
        <name>ATP</name>
        <dbReference type="ChEBI" id="CHEBI:30616"/>
    </ligand>
</feature>
<feature type="binding site" evidence="1">
    <location>
        <position position="61"/>
    </location>
    <ligand>
        <name>(R)-pantoate</name>
        <dbReference type="ChEBI" id="CHEBI:15980"/>
    </ligand>
</feature>
<feature type="binding site" evidence="1">
    <location>
        <position position="61"/>
    </location>
    <ligand>
        <name>beta-alanine</name>
        <dbReference type="ChEBI" id="CHEBI:57966"/>
    </ligand>
</feature>
<feature type="binding site" evidence="1">
    <location>
        <begin position="147"/>
        <end position="150"/>
    </location>
    <ligand>
        <name>ATP</name>
        <dbReference type="ChEBI" id="CHEBI:30616"/>
    </ligand>
</feature>
<feature type="binding site" evidence="1">
    <location>
        <position position="153"/>
    </location>
    <ligand>
        <name>(R)-pantoate</name>
        <dbReference type="ChEBI" id="CHEBI:15980"/>
    </ligand>
</feature>
<feature type="binding site" evidence="1">
    <location>
        <position position="176"/>
    </location>
    <ligand>
        <name>ATP</name>
        <dbReference type="ChEBI" id="CHEBI:30616"/>
    </ligand>
</feature>
<feature type="binding site" evidence="1">
    <location>
        <begin position="184"/>
        <end position="187"/>
    </location>
    <ligand>
        <name>ATP</name>
        <dbReference type="ChEBI" id="CHEBI:30616"/>
    </ligand>
</feature>